<dbReference type="EC" id="3.1.-.-"/>
<dbReference type="EMBL" id="CM000160">
    <property type="protein sequence ID" value="EDW96639.1"/>
    <property type="molecule type" value="Genomic_DNA"/>
</dbReference>
<dbReference type="SMR" id="B4PUM2"/>
<dbReference type="EnsemblMetazoa" id="FBtr0272462">
    <property type="protein sequence ID" value="FBpp0270954"/>
    <property type="gene ID" value="FBgn0242991"/>
</dbReference>
<dbReference type="EnsemblMetazoa" id="XM_002096891.4">
    <property type="protein sequence ID" value="XP_002096927.1"/>
    <property type="gene ID" value="LOC6536345"/>
</dbReference>
<dbReference type="GeneID" id="6536345"/>
<dbReference type="KEGG" id="dya:Dyak_GE25944"/>
<dbReference type="eggNOG" id="ENOG502QQQR">
    <property type="taxonomic scope" value="Eukaryota"/>
</dbReference>
<dbReference type="HOGENOM" id="CLU_054760_0_1_1"/>
<dbReference type="OMA" id="MVKCGFI"/>
<dbReference type="OrthoDB" id="9998343at2759"/>
<dbReference type="PhylomeDB" id="B4PUM2"/>
<dbReference type="Proteomes" id="UP000002282">
    <property type="component" value="Chromosome 3R"/>
</dbReference>
<dbReference type="GO" id="GO:0016788">
    <property type="term" value="F:hydrolase activity, acting on ester bonds"/>
    <property type="evidence" value="ECO:0007669"/>
    <property type="project" value="InterPro"/>
</dbReference>
<dbReference type="GO" id="GO:0008270">
    <property type="term" value="F:zinc ion binding"/>
    <property type="evidence" value="ECO:0007669"/>
    <property type="project" value="InterPro"/>
</dbReference>
<dbReference type="GO" id="GO:0009056">
    <property type="term" value="P:catabolic process"/>
    <property type="evidence" value="ECO:0007669"/>
    <property type="project" value="InterPro"/>
</dbReference>
<dbReference type="CDD" id="cd00530">
    <property type="entry name" value="PTE"/>
    <property type="match status" value="1"/>
</dbReference>
<dbReference type="Gene3D" id="3.20.20.140">
    <property type="entry name" value="Metal-dependent hydrolases"/>
    <property type="match status" value="1"/>
</dbReference>
<dbReference type="InterPro" id="IPR017947">
    <property type="entry name" value="AryldialkylPase_Zn-BS"/>
</dbReference>
<dbReference type="InterPro" id="IPR032466">
    <property type="entry name" value="Metal_Hydrolase"/>
</dbReference>
<dbReference type="InterPro" id="IPR001559">
    <property type="entry name" value="Phosphotriesterase"/>
</dbReference>
<dbReference type="PANTHER" id="PTHR10819">
    <property type="entry name" value="PHOSPHOTRIESTERASE-RELATED"/>
    <property type="match status" value="1"/>
</dbReference>
<dbReference type="PANTHER" id="PTHR10819:SF3">
    <property type="entry name" value="PHOSPHOTRIESTERASE-RELATED PROTEIN"/>
    <property type="match status" value="1"/>
</dbReference>
<dbReference type="Pfam" id="PF02126">
    <property type="entry name" value="PTE"/>
    <property type="match status" value="1"/>
</dbReference>
<dbReference type="SUPFAM" id="SSF51556">
    <property type="entry name" value="Metallo-dependent hydrolases"/>
    <property type="match status" value="1"/>
</dbReference>
<dbReference type="PROSITE" id="PS01322">
    <property type="entry name" value="PHOSPHOTRIESTERASE_1"/>
    <property type="match status" value="1"/>
</dbReference>
<dbReference type="PROSITE" id="PS51347">
    <property type="entry name" value="PHOSPHOTRIESTERASE_2"/>
    <property type="match status" value="1"/>
</dbReference>
<proteinExistence type="inferred from homology"/>
<gene>
    <name type="ORF">GE25944</name>
</gene>
<sequence length="350" mass="39402">MSTVQTVLGTITPNLLGRTLTHEHVALDFEHFYRPPPPDFESELKAKISMSTLGYVRLYPYSSKENVRFYDEEALEAAKKDVLLYKKHGGGSIVENSSYGLKRNLEFIVELAKSTGVHFIAGTGHYIHAMQDASHASLTVEQMSDLYSKDIITGQQVNGQMVKCGFIGEVASVYPIHDFEKNAIKAAGEIQEVLGCGVSMHPHRVTKAPFEIMRLYLEAGGRADKCVMSHLDRTIFDIDELLEFAKLGCYIQYDLFGTECSFYQLNTSVDMISDGQRIDNLIKLIKEGLVDKLLMSHDIHTKHRLTSYGGHGYHHIHTNILPRMFDRGVTLEQVEQMTVTNPANWLAFDP</sequence>
<comment type="cofactor">
    <cofactor evidence="1">
        <name>a divalent metal cation</name>
        <dbReference type="ChEBI" id="CHEBI:60240"/>
    </cofactor>
    <text evidence="1">Binds 2 divalent metal cations per subunit.</text>
</comment>
<comment type="similarity">
    <text evidence="2">Belongs to the metallo-dependent hydrolases superfamily. Phosphotriesterase family.</text>
</comment>
<reference key="1">
    <citation type="journal article" date="2007" name="Nature">
        <title>Evolution of genes and genomes on the Drosophila phylogeny.</title>
        <authorList>
            <consortium name="Drosophila 12 genomes consortium"/>
        </authorList>
    </citation>
    <scope>NUCLEOTIDE SEQUENCE [LARGE SCALE GENOMIC DNA]</scope>
    <source>
        <strain>Tai18E2 / Tucson 14021-0261.01</strain>
    </source>
</reference>
<organism>
    <name type="scientific">Drosophila yakuba</name>
    <name type="common">Fruit fly</name>
    <dbReference type="NCBI Taxonomy" id="7245"/>
    <lineage>
        <taxon>Eukaryota</taxon>
        <taxon>Metazoa</taxon>
        <taxon>Ecdysozoa</taxon>
        <taxon>Arthropoda</taxon>
        <taxon>Hexapoda</taxon>
        <taxon>Insecta</taxon>
        <taxon>Pterygota</taxon>
        <taxon>Neoptera</taxon>
        <taxon>Endopterygota</taxon>
        <taxon>Diptera</taxon>
        <taxon>Brachycera</taxon>
        <taxon>Muscomorpha</taxon>
        <taxon>Ephydroidea</taxon>
        <taxon>Drosophilidae</taxon>
        <taxon>Drosophila</taxon>
        <taxon>Sophophora</taxon>
    </lineage>
</organism>
<protein>
    <recommendedName>
        <fullName>Phosphotriesterase-related protein</fullName>
        <ecNumber>3.1.-.-</ecNumber>
    </recommendedName>
    <alternativeName>
        <fullName>Parathion hydrolase-related protein</fullName>
    </alternativeName>
</protein>
<keyword id="KW-0378">Hydrolase</keyword>
<keyword id="KW-0479">Metal-binding</keyword>
<accession>B4PUM2</accession>
<name>PTER_DROYA</name>
<feature type="chain" id="PRO_0000388682" description="Phosphotriesterase-related protein">
    <location>
        <begin position="1"/>
        <end position="350"/>
    </location>
</feature>
<feature type="binding site" evidence="1">
    <location>
        <position position="22"/>
    </location>
    <ligand>
        <name>a divalent metal cation</name>
        <dbReference type="ChEBI" id="CHEBI:60240"/>
        <label>1</label>
    </ligand>
</feature>
<feature type="binding site" evidence="1">
    <location>
        <position position="24"/>
    </location>
    <ligand>
        <name>a divalent metal cation</name>
        <dbReference type="ChEBI" id="CHEBI:60240"/>
        <label>1</label>
    </ligand>
</feature>
<feature type="binding site" evidence="1">
    <location>
        <position position="169"/>
    </location>
    <ligand>
        <name>a divalent metal cation</name>
        <dbReference type="ChEBI" id="CHEBI:60240"/>
        <label>1</label>
    </ligand>
</feature>
<feature type="binding site" evidence="1">
    <location>
        <position position="169"/>
    </location>
    <ligand>
        <name>a divalent metal cation</name>
        <dbReference type="ChEBI" id="CHEBI:60240"/>
        <label>2</label>
    </ligand>
</feature>
<feature type="binding site" evidence="1">
    <location>
        <position position="201"/>
    </location>
    <ligand>
        <name>a divalent metal cation</name>
        <dbReference type="ChEBI" id="CHEBI:60240"/>
        <label>2</label>
    </ligand>
</feature>
<feature type="binding site" evidence="1">
    <location>
        <position position="230"/>
    </location>
    <ligand>
        <name>a divalent metal cation</name>
        <dbReference type="ChEBI" id="CHEBI:60240"/>
        <label>2</label>
    </ligand>
</feature>
<feature type="binding site" evidence="1">
    <location>
        <position position="298"/>
    </location>
    <ligand>
        <name>a divalent metal cation</name>
        <dbReference type="ChEBI" id="CHEBI:60240"/>
        <label>1</label>
    </ligand>
</feature>
<evidence type="ECO:0000250" key="1">
    <source>
        <dbReference type="UniProtKB" id="P45548"/>
    </source>
</evidence>
<evidence type="ECO:0000255" key="2">
    <source>
        <dbReference type="PROSITE-ProRule" id="PRU00679"/>
    </source>
</evidence>